<evidence type="ECO:0000250" key="1">
    <source>
        <dbReference type="UniProtKB" id="Q16635"/>
    </source>
</evidence>
<evidence type="ECO:0000250" key="2">
    <source>
        <dbReference type="UniProtKB" id="Q3TFD2"/>
    </source>
</evidence>
<evidence type="ECO:0000250" key="3">
    <source>
        <dbReference type="UniProtKB" id="Q9V6G5"/>
    </source>
</evidence>
<evidence type="ECO:0000269" key="4">
    <source>
    </source>
</evidence>
<evidence type="ECO:0000269" key="5">
    <source>
    </source>
</evidence>
<evidence type="ECO:0000269" key="6">
    <source>
    </source>
</evidence>
<evidence type="ECO:0000269" key="7">
    <source>
    </source>
</evidence>
<evidence type="ECO:0000269" key="8">
    <source>
    </source>
</evidence>
<evidence type="ECO:0000269" key="9">
    <source>
    </source>
</evidence>
<evidence type="ECO:0000269" key="10">
    <source>
    </source>
</evidence>
<evidence type="ECO:0000269" key="11">
    <source>
    </source>
</evidence>
<evidence type="ECO:0000303" key="12">
    <source>
    </source>
</evidence>
<evidence type="ECO:0000303" key="13">
    <source>
    </source>
</evidence>
<evidence type="ECO:0000303" key="14">
    <source>
    </source>
</evidence>
<evidence type="ECO:0000303" key="15">
    <source>
    </source>
</evidence>
<evidence type="ECO:0000305" key="16"/>
<evidence type="ECO:0000305" key="17">
    <source>
    </source>
</evidence>
<evidence type="ECO:0000305" key="18">
    <source>
    </source>
</evidence>
<evidence type="ECO:0000305" key="19">
    <source>
    </source>
</evidence>
<evidence type="ECO:0000305" key="20">
    <source>
    </source>
</evidence>
<reference key="1">
    <citation type="journal article" date="1997" name="Nature">
        <title>The nucleotide sequence of Saccharomyces cerevisiae chromosome XVI.</title>
        <authorList>
            <person name="Bussey H."/>
            <person name="Storms R.K."/>
            <person name="Ahmed A."/>
            <person name="Albermann K."/>
            <person name="Allen E."/>
            <person name="Ansorge W."/>
            <person name="Araujo R."/>
            <person name="Aparicio A."/>
            <person name="Barrell B.G."/>
            <person name="Badcock K."/>
            <person name="Benes V."/>
            <person name="Botstein D."/>
            <person name="Bowman S."/>
            <person name="Brueckner M."/>
            <person name="Carpenter J."/>
            <person name="Cherry J.M."/>
            <person name="Chung E."/>
            <person name="Churcher C.M."/>
            <person name="Coster F."/>
            <person name="Davis K."/>
            <person name="Davis R.W."/>
            <person name="Dietrich F.S."/>
            <person name="Delius H."/>
            <person name="DiPaolo T."/>
            <person name="Dubois E."/>
            <person name="Duesterhoeft A."/>
            <person name="Duncan M."/>
            <person name="Floeth M."/>
            <person name="Fortin N."/>
            <person name="Friesen J.D."/>
            <person name="Fritz C."/>
            <person name="Goffeau A."/>
            <person name="Hall J."/>
            <person name="Hebling U."/>
            <person name="Heumann K."/>
            <person name="Hilbert H."/>
            <person name="Hillier L.W."/>
            <person name="Hunicke-Smith S."/>
            <person name="Hyman R.W."/>
            <person name="Johnston M."/>
            <person name="Kalman S."/>
            <person name="Kleine K."/>
            <person name="Komp C."/>
            <person name="Kurdi O."/>
            <person name="Lashkari D."/>
            <person name="Lew H."/>
            <person name="Lin A."/>
            <person name="Lin D."/>
            <person name="Louis E.J."/>
            <person name="Marathe R."/>
            <person name="Messenguy F."/>
            <person name="Mewes H.-W."/>
            <person name="Mirtipati S."/>
            <person name="Moestl D."/>
            <person name="Mueller-Auer S."/>
            <person name="Namath A."/>
            <person name="Nentwich U."/>
            <person name="Oefner P."/>
            <person name="Pearson D."/>
            <person name="Petel F.X."/>
            <person name="Pohl T.M."/>
            <person name="Purnelle B."/>
            <person name="Rajandream M.A."/>
            <person name="Rechmann S."/>
            <person name="Rieger M."/>
            <person name="Riles L."/>
            <person name="Roberts D."/>
            <person name="Schaefer M."/>
            <person name="Scharfe M."/>
            <person name="Scherens B."/>
            <person name="Schramm S."/>
            <person name="Schroeder M."/>
            <person name="Sdicu A.-M."/>
            <person name="Tettelin H."/>
            <person name="Urrestarazu L.A."/>
            <person name="Ushinsky S."/>
            <person name="Vierendeels F."/>
            <person name="Vissers S."/>
            <person name="Voss H."/>
            <person name="Walsh S.V."/>
            <person name="Wambutt R."/>
            <person name="Wang Y."/>
            <person name="Wedler E."/>
            <person name="Wedler H."/>
            <person name="Winnett E."/>
            <person name="Zhong W.-W."/>
            <person name="Zollner A."/>
            <person name="Vo D.H."/>
            <person name="Hani J."/>
        </authorList>
    </citation>
    <scope>NUCLEOTIDE SEQUENCE [LARGE SCALE GENOMIC DNA]</scope>
    <source>
        <strain>ATCC 204508 / S288c</strain>
    </source>
</reference>
<reference key="2">
    <citation type="journal article" date="2014" name="G3 (Bethesda)">
        <title>The reference genome sequence of Saccharomyces cerevisiae: Then and now.</title>
        <authorList>
            <person name="Engel S.R."/>
            <person name="Dietrich F.S."/>
            <person name="Fisk D.G."/>
            <person name="Binkley G."/>
            <person name="Balakrishnan R."/>
            <person name="Costanzo M.C."/>
            <person name="Dwight S.S."/>
            <person name="Hitz B.C."/>
            <person name="Karra K."/>
            <person name="Nash R.S."/>
            <person name="Weng S."/>
            <person name="Wong E.D."/>
            <person name="Lloyd P."/>
            <person name="Skrzypek M.S."/>
            <person name="Miyasato S.R."/>
            <person name="Simison M."/>
            <person name="Cherry J.M."/>
        </authorList>
    </citation>
    <scope>GENOME REANNOTATION</scope>
    <source>
        <strain>ATCC 204508 / S288c</strain>
    </source>
</reference>
<reference key="3">
    <citation type="journal article" date="2007" name="Genome Res.">
        <title>Approaching a complete repository of sequence-verified protein-encoding clones for Saccharomyces cerevisiae.</title>
        <authorList>
            <person name="Hu Y."/>
            <person name="Rolfs A."/>
            <person name="Bhullar B."/>
            <person name="Murthy T.V.S."/>
            <person name="Zhu C."/>
            <person name="Berger M.F."/>
            <person name="Camargo A.A."/>
            <person name="Kelley F."/>
            <person name="McCarron S."/>
            <person name="Jepson D."/>
            <person name="Richardson A."/>
            <person name="Raphael J."/>
            <person name="Moreira D."/>
            <person name="Taycher E."/>
            <person name="Zuo D."/>
            <person name="Mohr S."/>
            <person name="Kane M.F."/>
            <person name="Williamson J."/>
            <person name="Simpson A.J.G."/>
            <person name="Bulyk M.L."/>
            <person name="Harlow E."/>
            <person name="Marsischky G."/>
            <person name="Kolodner R.D."/>
            <person name="LaBaer J."/>
        </authorList>
    </citation>
    <scope>NUCLEOTIDE SEQUENCE [GENOMIC DNA]</scope>
    <source>
        <strain>ATCC 204508 / S288c</strain>
    </source>
</reference>
<reference key="4">
    <citation type="journal article" date="2003" name="Nature">
        <title>Global analysis of protein localization in budding yeast.</title>
        <authorList>
            <person name="Huh W.-K."/>
            <person name="Falvo J.V."/>
            <person name="Gerke L.C."/>
            <person name="Carroll A.S."/>
            <person name="Howson R.W."/>
            <person name="Weissman J.S."/>
            <person name="O'Shea E.K."/>
        </authorList>
    </citation>
    <scope>SUBCELLULAR LOCATION [LARGE SCALE ANALYSIS]</scope>
</reference>
<reference key="5">
    <citation type="journal article" date="2003" name="Nature">
        <title>Global analysis of protein expression in yeast.</title>
        <authorList>
            <person name="Ghaemmaghami S."/>
            <person name="Huh W.-K."/>
            <person name="Bower K."/>
            <person name="Howson R.W."/>
            <person name="Belle A."/>
            <person name="Dephoure N."/>
            <person name="O'Shea E.K."/>
            <person name="Weissman J.S."/>
        </authorList>
    </citation>
    <scope>LEVEL OF PROTEIN EXPRESSION [LARGE SCALE ANALYSIS]</scope>
</reference>
<reference key="6">
    <citation type="journal article" date="2003" name="Proc. Natl. Acad. Sci. U.S.A.">
        <title>The proteome of Saccharomyces cerevisiae mitochondria.</title>
        <authorList>
            <person name="Sickmann A."/>
            <person name="Reinders J."/>
            <person name="Wagner Y."/>
            <person name="Joppich C."/>
            <person name="Zahedi R.P."/>
            <person name="Meyer H.E."/>
            <person name="Schoenfisch B."/>
            <person name="Perschil I."/>
            <person name="Chacinska A."/>
            <person name="Guiard B."/>
            <person name="Rehling P."/>
            <person name="Pfanner N."/>
            <person name="Meisinger C."/>
        </authorList>
    </citation>
    <scope>SUBCELLULAR LOCATION [LARGE SCALE ANALYSIS]</scope>
    <source>
        <strain>ATCC 76625 / YPH499</strain>
    </source>
</reference>
<reference key="7">
    <citation type="journal article" date="2004" name="Mol. Microbiol.">
        <title>Aberrant cardiolipin metabolism in the yeast taz1 mutant: a model for Barth syndrome.</title>
        <authorList>
            <person name="Gu Z."/>
            <person name="Valianpour F."/>
            <person name="Chen S."/>
            <person name="Vaz F.M."/>
            <person name="Hakkaart G.A."/>
            <person name="Wanders R.J."/>
            <person name="Greenberg M.L."/>
        </authorList>
    </citation>
    <scope>FUNCTION IN CARDIOLIPIN METABOLISM</scope>
</reference>
<reference key="8">
    <citation type="journal article" date="2005" name="Biochem. J.">
        <title>Ypr140wp, 'the yeast tafazzin', displays a mitochondrial lysophosphatidylcholine (lyso-PC) acyltransferase activity related to triacylglycerol and mitochondrial lipid synthesis.</title>
        <authorList>
            <person name="Testet E."/>
            <person name="Laroche-Traineau J."/>
            <person name="Noubhani A."/>
            <person name="Coulon D."/>
            <person name="Bunoust O."/>
            <person name="Camougrand N."/>
            <person name="Manon S."/>
            <person name="Lessire R."/>
            <person name="Bessoule J.J."/>
        </authorList>
    </citation>
    <scope>FUNCTION</scope>
    <scope>CATALYTIC ACTIVITY</scope>
    <scope>SUBCELLULAR LOCATION</scope>
    <scope>BIOPHYSICOCHEMICAL PROPERTIES</scope>
</reference>
<reference key="9">
    <citation type="journal article" date="2005" name="Mol. Biol. Cell">
        <title>Taz1, an outer mitochondrial membrane protein, affects stability and assembly of inner membrane protein complexes: implications for Barth Syndrome.</title>
        <authorList>
            <person name="Brandner K."/>
            <person name="Mick D.U."/>
            <person name="Frazier A.E."/>
            <person name="Taylor R.D."/>
            <person name="Meisinger C."/>
            <person name="Rehling P."/>
        </authorList>
    </citation>
    <scope>FUNCTION</scope>
    <scope>SUBCELLULAR LOCATION</scope>
</reference>
<reference key="10">
    <citation type="journal article" date="2006" name="J. Cell Biol.">
        <title>Mitochondrial mislocalization and altered assembly of a cluster of Barth syndrome mutant tafazzins.</title>
        <authorList>
            <person name="Claypool S.M."/>
            <person name="McCaffery J.M."/>
            <person name="Koehler C.M."/>
        </authorList>
    </citation>
    <scope>SUBCELLULAR LOCATION</scope>
    <scope>TOPOLOGY</scope>
    <scope>MUTAGENESIS OF VAL-223; VAL-224; ILE-226 AND GLY-230</scope>
</reference>
<reference key="11">
    <citation type="journal article" date="2013" name="Eukaryot. Cell">
        <title>The Taz1p transacylase is imported and sorted into the outer mitochondrial membrane via a membrane anchor domain.</title>
        <authorList>
            <person name="Herndon J.D."/>
            <person name="Claypool S.M."/>
            <person name="Koehler C.M."/>
        </authorList>
    </citation>
    <scope>SUBCELLULAR LOCATION</scope>
    <scope>REGION</scope>
    <scope>MUTAGENESIS OF 215-LEU--GLU-232 AND VAL-224</scope>
</reference>
<reference key="12">
    <citation type="journal article" date="2017" name="J. Biol. Chem.">
        <title>The Basis for Acyl Specificity in the Tafazzin Reaction.</title>
        <authorList>
            <person name="Schlame M."/>
            <person name="Xu Y."/>
            <person name="Ren M."/>
        </authorList>
    </citation>
    <scope>FUNCTION</scope>
    <scope>CATALYTIC ACTIVITY</scope>
</reference>
<reference key="13">
    <citation type="journal article" date="2017" name="Biochemistry">
        <title>Role of Acyl Chain Composition of Phosphatidylcholine in Tafazzin-Mediated Remodeling of Cardiolipin in Liposomes.</title>
        <authorList>
            <person name="Abe M."/>
            <person name="Sawada Y."/>
            <person name="Uno S."/>
            <person name="Chigasaki S."/>
            <person name="Oku M."/>
            <person name="Sakai Y."/>
            <person name="Miyoshi H."/>
        </authorList>
    </citation>
    <scope>FUNCTION</scope>
    <scope>CATALYTIC ACTIVITY</scope>
</reference>
<organism>
    <name type="scientific">Saccharomyces cerevisiae (strain ATCC 204508 / S288c)</name>
    <name type="common">Baker's yeast</name>
    <dbReference type="NCBI Taxonomy" id="559292"/>
    <lineage>
        <taxon>Eukaryota</taxon>
        <taxon>Fungi</taxon>
        <taxon>Dikarya</taxon>
        <taxon>Ascomycota</taxon>
        <taxon>Saccharomycotina</taxon>
        <taxon>Saccharomycetes</taxon>
        <taxon>Saccharomycetales</taxon>
        <taxon>Saccharomycetaceae</taxon>
        <taxon>Saccharomyces</taxon>
    </lineage>
</organism>
<keyword id="KW-0012">Acyltransferase</keyword>
<keyword id="KW-0443">Lipid metabolism</keyword>
<keyword id="KW-0472">Membrane</keyword>
<keyword id="KW-0496">Mitochondrion</keyword>
<keyword id="KW-0999">Mitochondrion inner membrane</keyword>
<keyword id="KW-1000">Mitochondrion outer membrane</keyword>
<keyword id="KW-1185">Reference proteome</keyword>
<keyword id="KW-0808">Transferase</keyword>
<accession>Q06510</accession>
<accession>D6W4D8</accession>
<accession>Q6B2J1</accession>
<sequence>MSFRDVLERGDEFLEAYPRRSPLWRFLSYSTSLLTFGVSKLLLFTCYNVKLNGFEKLETALERSKRENRGLMTVMNHMSMVDDPLVWATLPYKLFTSLDNIRWSLGAHNICFQNKFLANFFSLGQVLSTERFGVGPFQGSIDASIRLLSPDDTLDLEWTPHSEVSSSLKKAYSPPIIRSKPSWVHVYPEGFVLQLYPPFENSMRYFKWGITRMILEATKPPIVVPIFATGFEKIASEAVTDSMFRQILPRNFGSEINVTIGDPLNDDLIDRYRKEWTHLVEKYYDPKNPNDLSDELKYGKEAQDLRSRLAAELRAHVAEIRNEVRKLPREDPRFKSPSWWKRFNTTEGKSDPDVKVIGENWAIRRMQKFLPPEGKPKGKDD</sequence>
<feature type="chain" id="PRO_0000220934" description="Tafazzin">
    <location>
        <begin position="1"/>
        <end position="381"/>
    </location>
</feature>
<feature type="topological domain" description="Mitochondrial intermembrane" evidence="18">
    <location>
        <begin position="1"/>
        <end position="25"/>
    </location>
</feature>
<feature type="intramembrane region" evidence="18">
    <location>
        <begin position="26"/>
        <end position="47"/>
    </location>
</feature>
<feature type="topological domain" description="Mitochondrial intermembrane" evidence="18">
    <location>
        <begin position="48"/>
        <end position="381"/>
    </location>
</feature>
<feature type="region of interest" description="Required for membrane insertion" evidence="9">
    <location>
        <begin position="215"/>
        <end position="232"/>
    </location>
</feature>
<feature type="short sequence motif" description="HXXXXD motif" evidence="2">
    <location>
        <begin position="77"/>
        <end position="82"/>
    </location>
</feature>
<feature type="mutagenesis site" description="Abolishes insertion into mitochondrial membranes." evidence="9">
    <location>
        <begin position="215"/>
        <end position="232"/>
    </location>
</feature>
<feature type="mutagenesis site" description="Greatly reduced expression. Mislocalization to mitochondrial matrix." evidence="8">
    <original>V</original>
    <variation>D</variation>
    <location>
        <position position="223"/>
    </location>
</feature>
<feature type="mutagenesis site" description="Greatly reduced expression. Mislocalization to mitochondrial matrix." evidence="8 9">
    <original>V</original>
    <variation>R</variation>
    <location>
        <position position="224"/>
    </location>
</feature>
<feature type="mutagenesis site" description="Greatly reduced expression. Mislocalization to mitochondrial matrix." evidence="8">
    <original>I</original>
    <variation>P</variation>
    <location>
        <position position="226"/>
    </location>
</feature>
<feature type="mutagenesis site" description="Slightly reduced expression. Does not affect mitochondrial membrane localization but shows weaker membrane association." evidence="8">
    <original>G</original>
    <variation>R</variation>
    <location>
        <position position="230"/>
    </location>
</feature>
<feature type="sequence conflict" description="In Ref. 3; AAT92758." evidence="16" ref="3">
    <original>D</original>
    <variation>Y</variation>
    <location>
        <position position="11"/>
    </location>
</feature>
<proteinExistence type="evidence at protein level"/>
<comment type="function">
    <text evidence="1 3 5 6 7 10 11">Acyltransferase required to remodel newly synthesized phospholipid cardiolipin (1',3'-bis-[1,2-diacyl-sn-glycero-3-phospho]-glycerol or CL), a key component of the mitochondrial inner membrane, with tissue specific acyl chains necessary for adequate mitochondrial function (PubMed:14651618, PubMed:28202545, PubMed:29091407). Its role in cellular physiology is to improve mitochondrial performance (By similarity). CL is critical for the coassembly of lipids and proteins in mitochondrial membranes, for instance, remodeling of the acyl groups of CL in the mitochondrial inner membrane affects the assembly and stability of respiratory chain complex IV and its supercomplex forms (PubMed:16135531). Catalyzes the transacylation between phospholipids and lysophospholipids, with the highest rate being between phosphatidylcholine (1,2-diacyl-sn-glycero-3-phosphocholine or PC) and CL. Catalyzes both 1-acyl-sn-glycero-3-phosphocholine (lysophosphatidylcholine or LPC) reacylation and PC-CL transacylation, that means, it exchanges acyl groups between CL and PC by a combination of forward and reverse transacylations. Also catalyzes transacylations between other phospholipids such as phosphatidylethanolamine (1,2-diacyl-sn-glycero-3-phosphoethanolamine or PE) and CL, between PC and PE, and between PC and phosphatidate (1,2-diacyl-sn-glycero-3-phosphate or PA), although at lower rate. Not regiospecific, it transfers acyl groups into any of the sn-1 and sn-2 positions of the monolysocardiolipin (MLCL), which is an important prerequisite for uniformity and symmetry in CL acyl distribution. Cannot transacylate dilysocardiolipin (DLCL), thus, the role of MLCL is limited to that of an acyl acceptor (By similarity). CoA-independent, it can reshuffle molecular species within a single phospholipid class (PubMed:15588229). Redistributes fatty acids between MLCL, CL, and other lipids, which prolongs the half-life of CL. Its action is completely reversible, which allows for cyclic changes, such as fission and fusion or bending and flattening of the membrane. Hence, by contributing to the flexibility of the lipid composition, it plays an important role in the dynamics of mitochondria membranes. Essential for the final stage of spermatogenesis, spermatid individualization (By similarity). Required for the initiation of mitophagy (By similarity).</text>
</comment>
<comment type="catalytic activity">
    <reaction evidence="10 11">
        <text>1'-[1,2-diacyl-sn-glycero-3-phospho],3'-[1-acyl-sn-glycero-3-phospho]-glycerol + a 1,2-diacyl-sn-glycero-3-phosphocholine = a cardiolipin + a 1-acyl-sn-glycero-3-phosphocholine</text>
        <dbReference type="Rhea" id="RHEA:33731"/>
        <dbReference type="ChEBI" id="CHEBI:57643"/>
        <dbReference type="ChEBI" id="CHEBI:58168"/>
        <dbReference type="ChEBI" id="CHEBI:62237"/>
        <dbReference type="ChEBI" id="CHEBI:64743"/>
    </reaction>
    <physiologicalReaction direction="left-to-right" evidence="10 11">
        <dbReference type="Rhea" id="RHEA:33732"/>
    </physiologicalReaction>
    <physiologicalReaction direction="right-to-left" evidence="19 20">
        <dbReference type="Rhea" id="RHEA:33733"/>
    </physiologicalReaction>
</comment>
<comment type="catalytic activity">
    <reaction evidence="10">
        <text>1,2-di-(9Z,12Z-octadecadienoyl)-sn-glycero-3-phosphocholine + 1'-[1,2-di-(9Z,12Z-octadecadienoyl)-sn-glycero-3-phospho]-3'-[1-(9Z,12Z-octadecadienoyl)-sn-glycero-3-phospho]-glycerol = 1-(9Z,12Z)-octadecadienoyl-sn-glycero-3-phosphocholine + 1',3'-bis-[1,2-di-(9Z,12Z-octadecadienoyl)-sn-glycero-3-phospho]-glycerol</text>
        <dbReference type="Rhea" id="RHEA:67456"/>
        <dbReference type="ChEBI" id="CHEBI:28733"/>
        <dbReference type="ChEBI" id="CHEBI:42027"/>
        <dbReference type="ChEBI" id="CHEBI:83580"/>
        <dbReference type="ChEBI" id="CHEBI:83581"/>
    </reaction>
    <physiologicalReaction direction="left-to-right" evidence="10">
        <dbReference type="Rhea" id="RHEA:67457"/>
    </physiologicalReaction>
    <physiologicalReaction direction="right-to-left" evidence="19">
        <dbReference type="Rhea" id="RHEA:67458"/>
    </physiologicalReaction>
</comment>
<comment type="catalytic activity">
    <reaction evidence="11">
        <text>1'-[1,2-di-(9Z-octadecenoyl)-sn-glycero-3-phospho]-3'-[1-(9Z-octadecenoyl)-2-hexadecanoyl-sn-glycero-3-phospho]-glycerol + 1-hexadecanoyl-sn-glycero-3-phosphocholine = 1'-[1,2-di-(9Z-octadecenoyl)-sn-glycero-3-phospho]-3'-[1-(9Z-octadecenoyl)-sn-glycero-3-phospho]-glycerol + 1,2-dihexadecanoyl-sn-glycero-3-phosphocholine</text>
        <dbReference type="Rhea" id="RHEA:67756"/>
        <dbReference type="ChEBI" id="CHEBI:72998"/>
        <dbReference type="ChEBI" id="CHEBI:72999"/>
        <dbReference type="ChEBI" id="CHEBI:77259"/>
        <dbReference type="ChEBI" id="CHEBI:173221"/>
    </reaction>
    <physiologicalReaction direction="left-to-right" evidence="20">
        <dbReference type="Rhea" id="RHEA:67757"/>
    </physiologicalReaction>
    <physiologicalReaction direction="right-to-left" evidence="11">
        <dbReference type="Rhea" id="RHEA:67758"/>
    </physiologicalReaction>
</comment>
<comment type="catalytic activity">
    <reaction evidence="11">
        <text>1'-[1,2-di-(9Z-octadecenoyl)-sn-glycero-3-phospho]-3'-[1-(9Z-octadecenoyl)-2-(9Z-hexadecenoyl)-sn-glycero-3-phospho]-glycerol + 1-(9Z-hexadecenoyl)-sn-glycero-3-phosphocholine = 1,2-di-(9Z-hexadecenoyl)-sn-glycero-3-phosphocholine + 1'-[1,2-di-(9Z-octadecenoyl)-sn-glycero-3-phospho]-3'-[1-(9Z-octadecenoyl)-sn-glycero-3-phospho]-glycerol</text>
        <dbReference type="Rhea" id="RHEA:67760"/>
        <dbReference type="ChEBI" id="CHEBI:73851"/>
        <dbReference type="ChEBI" id="CHEBI:77259"/>
        <dbReference type="ChEBI" id="CHEBI:83717"/>
        <dbReference type="ChEBI" id="CHEBI:173222"/>
    </reaction>
    <physiologicalReaction direction="left-to-right" evidence="20">
        <dbReference type="Rhea" id="RHEA:67761"/>
    </physiologicalReaction>
    <physiologicalReaction direction="right-to-left" evidence="11">
        <dbReference type="Rhea" id="RHEA:67762"/>
    </physiologicalReaction>
</comment>
<comment type="catalytic activity">
    <reaction evidence="11">
        <text>1',3'-bis[1,2-di-(9Z-octadecenoyl)-sn-glycero-3-phospho]-glycerol + 1-(9Z-octadecenoyl)-sn-glycero-3-phosphocholine = 1'-[1,2-di-(9Z-octadecenoyl)-sn-glycero-3-phospho]-3'-[1-(9Z-octadecenoyl)-sn-glycero-3-phospho]-glycerol + 1,2-di-(9Z-octadecenoyl)-sn-glycero-3-phosphocholine</text>
        <dbReference type="Rhea" id="RHEA:67764"/>
        <dbReference type="ChEBI" id="CHEBI:28610"/>
        <dbReference type="ChEBI" id="CHEBI:74669"/>
        <dbReference type="ChEBI" id="CHEBI:77253"/>
        <dbReference type="ChEBI" id="CHEBI:77259"/>
    </reaction>
    <physiologicalReaction direction="left-to-right" evidence="20">
        <dbReference type="Rhea" id="RHEA:67765"/>
    </physiologicalReaction>
    <physiologicalReaction direction="right-to-left" evidence="11">
        <dbReference type="Rhea" id="RHEA:67766"/>
    </physiologicalReaction>
</comment>
<comment type="catalytic activity">
    <reaction evidence="11">
        <text>1'-[1,2-di-(9Z-octadecenoyl)-sn-glycero-3-phospho]-3'-[1-(9Z-octadecenoyl)-2-(9Z,12Z-octadecadienoyl)-sn-glycero-3-phospho]-glycerol + 1-(9Z,12Z)-octadecadienoyl-sn-glycero-3-phosphocholine = 1,2-di-(9Z,12Z-octadecadienoyl)-sn-glycero-3-phosphocholine + 1'-[1,2-di-(9Z-octadecenoyl)-sn-glycero-3-phospho]-3'-[1-(9Z-octadecenoyl)-sn-glycero-3-phospho]-glycerol</text>
        <dbReference type="Rhea" id="RHEA:67768"/>
        <dbReference type="ChEBI" id="CHEBI:28733"/>
        <dbReference type="ChEBI" id="CHEBI:42027"/>
        <dbReference type="ChEBI" id="CHEBI:77259"/>
        <dbReference type="ChEBI" id="CHEBI:173223"/>
    </reaction>
    <physiologicalReaction direction="left-to-right" evidence="20">
        <dbReference type="Rhea" id="RHEA:67769"/>
    </physiologicalReaction>
    <physiologicalReaction direction="right-to-left" evidence="11">
        <dbReference type="Rhea" id="RHEA:67770"/>
    </physiologicalReaction>
</comment>
<comment type="catalytic activity">
    <reaction evidence="11">
        <text>1'-[1,2-di-(9Z-octadecenoyl)-sn-glycero-3-phospho]-3'-[1-(9Z-octadecenoyl)-2-(9Z-hexadecenoyl)-sn-glycero-3-phospho]-glycerol + 1-hexadecanoyl-sn-glycero-3-phosphocholine = 1-hexadecanoyl-2-(9Z-hexadecenoyl)-sn-glycero-3-phosphocholine + 1'-[1,2-di-(9Z-octadecenoyl)-sn-glycero-3-phospho]-3'-[1-(9Z-octadecenoyl)-sn-glycero-3-phospho]-glycerol</text>
        <dbReference type="Rhea" id="RHEA:67780"/>
        <dbReference type="ChEBI" id="CHEBI:72998"/>
        <dbReference type="ChEBI" id="CHEBI:74000"/>
        <dbReference type="ChEBI" id="CHEBI:77259"/>
        <dbReference type="ChEBI" id="CHEBI:173222"/>
    </reaction>
    <physiologicalReaction direction="left-to-right" evidence="20">
        <dbReference type="Rhea" id="RHEA:67781"/>
    </physiologicalReaction>
    <physiologicalReaction direction="right-to-left" evidence="11">
        <dbReference type="Rhea" id="RHEA:67782"/>
    </physiologicalReaction>
</comment>
<comment type="catalytic activity">
    <reaction evidence="11">
        <text>1'-[1,2-di-(9Z-octadecenoyl)-sn-glycero-3-phospho]-3'-[1-(9Z-octadecenoyl)-2-hexadecanoyl-sn-glycero-3-phospho]-glycerol + 1-(9Z-hexadecenoyl)-sn-glycero-3-phosphocholine = 1-(9Z-hexadecenoyl)-2-hexadecanoyl-sn-glycero-3-phosphocholine + 1'-[1,2-di-(9Z-octadecenoyl)-sn-glycero-3-phospho]-3'-[1-(9Z-octadecenoyl)-sn-glycero-3-phospho]-glycerol</text>
        <dbReference type="Rhea" id="RHEA:67820"/>
        <dbReference type="ChEBI" id="CHEBI:73851"/>
        <dbReference type="ChEBI" id="CHEBI:77259"/>
        <dbReference type="ChEBI" id="CHEBI:89731"/>
        <dbReference type="ChEBI" id="CHEBI:173221"/>
    </reaction>
    <physiologicalReaction direction="left-to-right" evidence="20">
        <dbReference type="Rhea" id="RHEA:67821"/>
    </physiologicalReaction>
    <physiologicalReaction direction="right-to-left" evidence="11">
        <dbReference type="Rhea" id="RHEA:67822"/>
    </physiologicalReaction>
</comment>
<comment type="catalytic activity">
    <reaction evidence="11">
        <text>2 1'-[1,2-diacyl-sn-glycero-3-phospho],3'-[1-acyl-sn-glycero-3-phospho]-glycerol = 1',3'-bis-[1-acyl-sn-glycero-3-phospho]-glycerol + a cardiolipin</text>
        <dbReference type="Rhea" id="RHEA:67788"/>
        <dbReference type="ChEBI" id="CHEBI:62237"/>
        <dbReference type="ChEBI" id="CHEBI:64743"/>
        <dbReference type="ChEBI" id="CHEBI:75137"/>
    </reaction>
    <physiologicalReaction direction="left-to-right" evidence="11">
        <dbReference type="Rhea" id="RHEA:67789"/>
    </physiologicalReaction>
</comment>
<comment type="catalytic activity">
    <reaction evidence="11">
        <text>2 1'-[1,2-di-(9Z-octadecenoyl)-sn-glycero-3-phospho]-3'-[1-(9Z-octadecenoyl)-sn-glycero-3-phospho]-glycerol = 1',3'-bis-[1-(9Z-octadecenoyl)-sn-glycero-3-phospho]-glycerol + 1',3'-bis[1,2-di-(9Z-octadecenoyl)-sn-glycero-3-phospho]-glycerol</text>
        <dbReference type="Rhea" id="RHEA:67784"/>
        <dbReference type="ChEBI" id="CHEBI:77253"/>
        <dbReference type="ChEBI" id="CHEBI:77256"/>
        <dbReference type="ChEBI" id="CHEBI:77259"/>
    </reaction>
    <physiologicalReaction direction="left-to-right" evidence="11">
        <dbReference type="Rhea" id="RHEA:67785"/>
    </physiologicalReaction>
</comment>
<comment type="catalytic activity">
    <reaction evidence="3">
        <text>1,2-di-(9Z-hexadecenoyl)-sn-glycero-3-phosphocholine + 1-hexadecanoyl-sn-glycero-3-phosphocholine = 1-hexadecanoyl-2-(9Z-hexadecenoyl)-sn-glycero-3-phosphocholine + 1-(9Z-hexadecenoyl)-sn-glycero-3-phosphocholine</text>
        <dbReference type="Rhea" id="RHEA:43808"/>
        <dbReference type="ChEBI" id="CHEBI:72998"/>
        <dbReference type="ChEBI" id="CHEBI:73851"/>
        <dbReference type="ChEBI" id="CHEBI:74000"/>
        <dbReference type="ChEBI" id="CHEBI:83717"/>
    </reaction>
    <physiologicalReaction direction="left-to-right" evidence="3">
        <dbReference type="Rhea" id="RHEA:43809"/>
    </physiologicalReaction>
    <physiologicalReaction direction="right-to-left" evidence="3">
        <dbReference type="Rhea" id="RHEA:43810"/>
    </physiologicalReaction>
</comment>
<comment type="catalytic activity">
    <reaction evidence="10">
        <text>1'-[1,2-di-(9Z,12Z-octadecadienoyl)-sn-glycero-3-phospho]-3'-[1-(9Z,12Z-octadecadienoyl)-sn-glycero-3-phospho]-glycerol + 1,2-di-(9Z-octadecenoyl)-sn-glycero-3-phosphocholine = 1'-[1,2-di-(9Z,12Z-octadecadienoyl)-sn-glycero-3-phospho]-3'-[1-(9Z,12Z-octadecadienoyl)-2-(9Z-octadecenoyl)-sn-glycero-3-phospho]-glycerol + 1-(9Z-octadecenoyl)-sn-glycero-3-phosphocholine</text>
        <dbReference type="Rhea" id="RHEA:67836"/>
        <dbReference type="ChEBI" id="CHEBI:28610"/>
        <dbReference type="ChEBI" id="CHEBI:74669"/>
        <dbReference type="ChEBI" id="CHEBI:83580"/>
        <dbReference type="ChEBI" id="CHEBI:83582"/>
    </reaction>
    <physiologicalReaction direction="left-to-right" evidence="10">
        <dbReference type="Rhea" id="RHEA:67837"/>
    </physiologicalReaction>
    <physiologicalReaction direction="right-to-left" evidence="19">
        <dbReference type="Rhea" id="RHEA:67838"/>
    </physiologicalReaction>
</comment>
<comment type="biophysicochemical properties">
    <kinetics>
        <KM evidence="6">7 uM for lysophosphatidylcholine</KM>
    </kinetics>
</comment>
<comment type="pathway">
    <text evidence="17 19 20">Phospholipid metabolism.</text>
</comment>
<comment type="subcellular location">
    <subcellularLocation>
        <location evidence="6 7 8 9">Mitochondrion outer membrane</location>
        <topology evidence="8">Peripheral membrane protein</topology>
        <orientation evidence="7 8">Intermembrane side</orientation>
    </subcellularLocation>
    <subcellularLocation>
        <location evidence="8 9">Mitochondrion inner membrane</location>
        <topology evidence="8">Peripheral membrane protein</topology>
        <orientation evidence="8">Intermembrane side</orientation>
    </subcellularLocation>
    <text evidence="9">Imported into mitochondria by the TOM complex and is first imported into the mitochondrion outer membrane in a TIM9-TIM10-dependent manner followed by insertion into the mitochondrion inner membrane.</text>
</comment>
<comment type="domain">
    <text evidence="2">The HXXXXD motif is essential for acyltransferase activity.</text>
</comment>
<comment type="miscellaneous">
    <text evidence="1 4">Present with 1340 molecules/cell in log phase SD medium (PubMed:14562106). The enzyme was named after a masochistic character Tafazzi, once popular on Italian television, apparently due to the difficulty encountered for its identification and characterization (By similarity).</text>
</comment>
<comment type="similarity">
    <text evidence="16">Belongs to the taffazin family.</text>
</comment>
<gene>
    <name type="primary">TAZ1</name>
    <name evidence="12" type="ordered locus">YPR140W</name>
</gene>
<protein>
    <recommendedName>
        <fullName evidence="12 14 15">Tafazzin</fullName>
        <shortName evidence="13">Taz</shortName>
        <ecNumber evidence="6 10 11">2.3.1.-</ecNumber>
    </recommendedName>
</protein>
<dbReference type="EC" id="2.3.1.-" evidence="6 10 11"/>
<dbReference type="EMBL" id="U40829">
    <property type="protein sequence ID" value="AAB68280.1"/>
    <property type="molecule type" value="Genomic_DNA"/>
</dbReference>
<dbReference type="EMBL" id="AY692739">
    <property type="protein sequence ID" value="AAT92758.1"/>
    <property type="molecule type" value="Genomic_DNA"/>
</dbReference>
<dbReference type="EMBL" id="BK006949">
    <property type="protein sequence ID" value="DAA11554.1"/>
    <property type="molecule type" value="Genomic_DNA"/>
</dbReference>
<dbReference type="PIR" id="S69029">
    <property type="entry name" value="S69029"/>
</dbReference>
<dbReference type="RefSeq" id="NP_015466.1">
    <property type="nucleotide sequence ID" value="NM_001184237.1"/>
</dbReference>
<dbReference type="SMR" id="Q06510"/>
<dbReference type="BioGRID" id="36309">
    <property type="interactions" value="98"/>
</dbReference>
<dbReference type="FunCoup" id="Q06510">
    <property type="interactions" value="145"/>
</dbReference>
<dbReference type="IntAct" id="Q06510">
    <property type="interactions" value="3"/>
</dbReference>
<dbReference type="MINT" id="Q06510"/>
<dbReference type="STRING" id="4932.YPR140W"/>
<dbReference type="SwissLipids" id="SLP:000000064"/>
<dbReference type="PaxDb" id="4932-YPR140W"/>
<dbReference type="PeptideAtlas" id="Q06510"/>
<dbReference type="EnsemblFungi" id="YPR140W_mRNA">
    <property type="protein sequence ID" value="YPR140W"/>
    <property type="gene ID" value="YPR140W"/>
</dbReference>
<dbReference type="GeneID" id="856262"/>
<dbReference type="KEGG" id="sce:YPR140W"/>
<dbReference type="AGR" id="SGD:S000006344"/>
<dbReference type="SGD" id="S000006344">
    <property type="gene designation" value="TAZ1"/>
</dbReference>
<dbReference type="VEuPathDB" id="FungiDB:YPR140W"/>
<dbReference type="eggNOG" id="KOG2847">
    <property type="taxonomic scope" value="Eukaryota"/>
</dbReference>
<dbReference type="GeneTree" id="ENSGT00390000018621"/>
<dbReference type="HOGENOM" id="CLU_046747_1_1_1"/>
<dbReference type="InParanoid" id="Q06510"/>
<dbReference type="OMA" id="IMRYFKW"/>
<dbReference type="OrthoDB" id="193467at2759"/>
<dbReference type="BioCyc" id="MetaCyc:G3O-34275-MONOMER"/>
<dbReference type="BioCyc" id="YEAST:G3O-34275-MONOMER"/>
<dbReference type="Reactome" id="R-SCE-1268020">
    <property type="pathway name" value="Mitochondrial protein import"/>
</dbReference>
<dbReference type="Reactome" id="R-SCE-1482798">
    <property type="pathway name" value="Acyl chain remodeling of CL"/>
</dbReference>
<dbReference type="BioGRID-ORCS" id="856262">
    <property type="hits" value="0 hits in 10 CRISPR screens"/>
</dbReference>
<dbReference type="PRO" id="PR:Q06510"/>
<dbReference type="Proteomes" id="UP000002311">
    <property type="component" value="Chromosome XVI"/>
</dbReference>
<dbReference type="RNAct" id="Q06510">
    <property type="molecule type" value="protein"/>
</dbReference>
<dbReference type="GO" id="GO:0005743">
    <property type="term" value="C:mitochondrial inner membrane"/>
    <property type="evidence" value="ECO:0000314"/>
    <property type="project" value="UniProtKB"/>
</dbReference>
<dbReference type="GO" id="GO:0005758">
    <property type="term" value="C:mitochondrial intermembrane space"/>
    <property type="evidence" value="ECO:0000304"/>
    <property type="project" value="Reactome"/>
</dbReference>
<dbReference type="GO" id="GO:0031966">
    <property type="term" value="C:mitochondrial membrane"/>
    <property type="evidence" value="ECO:0000318"/>
    <property type="project" value="GO_Central"/>
</dbReference>
<dbReference type="GO" id="GO:0005741">
    <property type="term" value="C:mitochondrial outer membrane"/>
    <property type="evidence" value="ECO:0000314"/>
    <property type="project" value="UniProtKB"/>
</dbReference>
<dbReference type="GO" id="GO:0005739">
    <property type="term" value="C:mitochondrion"/>
    <property type="evidence" value="ECO:0000314"/>
    <property type="project" value="SGD"/>
</dbReference>
<dbReference type="GO" id="GO:0047184">
    <property type="term" value="F:1-acylglycerophosphocholine O-acyltransferase activity"/>
    <property type="evidence" value="ECO:0000314"/>
    <property type="project" value="SGD"/>
</dbReference>
<dbReference type="GO" id="GO:0035965">
    <property type="term" value="P:cardiolipin acyl-chain remodeling"/>
    <property type="evidence" value="ECO:0000314"/>
    <property type="project" value="SGD"/>
</dbReference>
<dbReference type="GO" id="GO:0032048">
    <property type="term" value="P:cardiolipin metabolic process"/>
    <property type="evidence" value="ECO:0000315"/>
    <property type="project" value="SGD"/>
</dbReference>
<dbReference type="GO" id="GO:0007007">
    <property type="term" value="P:inner mitochondrial membrane organization"/>
    <property type="evidence" value="ECO:0000315"/>
    <property type="project" value="SGD"/>
</dbReference>
<dbReference type="GO" id="GO:0042775">
    <property type="term" value="P:mitochondrial ATP synthesis coupled electron transport"/>
    <property type="evidence" value="ECO:0000315"/>
    <property type="project" value="SGD"/>
</dbReference>
<dbReference type="GO" id="GO:0097250">
    <property type="term" value="P:mitochondrial respirasome assembly"/>
    <property type="evidence" value="ECO:0000315"/>
    <property type="project" value="SGD"/>
</dbReference>
<dbReference type="GO" id="GO:0008654">
    <property type="term" value="P:phospholipid biosynthetic process"/>
    <property type="evidence" value="ECO:0000315"/>
    <property type="project" value="SGD"/>
</dbReference>
<dbReference type="CDD" id="cd07989">
    <property type="entry name" value="LPLAT_AGPAT-like"/>
    <property type="match status" value="1"/>
</dbReference>
<dbReference type="InterPro" id="IPR002123">
    <property type="entry name" value="Plipid/glycerol_acylTrfase"/>
</dbReference>
<dbReference type="InterPro" id="IPR000872">
    <property type="entry name" value="Tafazzin"/>
</dbReference>
<dbReference type="PANTHER" id="PTHR12497:SF0">
    <property type="entry name" value="TAFAZZIN"/>
    <property type="match status" value="1"/>
</dbReference>
<dbReference type="PANTHER" id="PTHR12497">
    <property type="entry name" value="TAZ PROTEIN TAFAZZIN"/>
    <property type="match status" value="1"/>
</dbReference>
<dbReference type="Pfam" id="PF01553">
    <property type="entry name" value="Acyltransferase"/>
    <property type="match status" value="1"/>
</dbReference>
<dbReference type="PRINTS" id="PR00979">
    <property type="entry name" value="TAFAZZIN"/>
</dbReference>
<dbReference type="SMART" id="SM00563">
    <property type="entry name" value="PlsC"/>
    <property type="match status" value="1"/>
</dbReference>
<name>TAZ_YEAST</name>